<dbReference type="EMBL" id="AE000783">
    <property type="protein sequence ID" value="AAC66853.1"/>
    <property type="molecule type" value="Genomic_DNA"/>
</dbReference>
<dbReference type="PIR" id="H70160">
    <property type="entry name" value="H70160"/>
</dbReference>
<dbReference type="RefSeq" id="NP_212623.1">
    <property type="nucleotide sequence ID" value="NC_001318.1"/>
</dbReference>
<dbReference type="RefSeq" id="WP_002557080.1">
    <property type="nucleotide sequence ID" value="NC_001318.1"/>
</dbReference>
<dbReference type="PDB" id="8FMW">
    <property type="method" value="EM"/>
    <property type="resolution" value="2.86 A"/>
    <property type="chains" value="AW=1-101"/>
</dbReference>
<dbReference type="PDB" id="8FN2">
    <property type="method" value="EM"/>
    <property type="resolution" value="3.40 A"/>
    <property type="chains" value="W=1-101"/>
</dbReference>
<dbReference type="PDBsum" id="8FMW"/>
<dbReference type="PDBsum" id="8FN2"/>
<dbReference type="EMDB" id="EMD-29298"/>
<dbReference type="EMDB" id="EMD-29304"/>
<dbReference type="SMR" id="O51442"/>
<dbReference type="STRING" id="224326.BB_0489"/>
<dbReference type="PaxDb" id="224326-BB_0489"/>
<dbReference type="EnsemblBacteria" id="AAC66853">
    <property type="protein sequence ID" value="AAC66853"/>
    <property type="gene ID" value="BB_0489"/>
</dbReference>
<dbReference type="GeneID" id="56567924"/>
<dbReference type="KEGG" id="bbu:BB_0489"/>
<dbReference type="PATRIC" id="fig|224326.49.peg.880"/>
<dbReference type="HOGENOM" id="CLU_093315_2_3_12"/>
<dbReference type="OrthoDB" id="9807419at2"/>
<dbReference type="Proteomes" id="UP000001807">
    <property type="component" value="Chromosome"/>
</dbReference>
<dbReference type="GO" id="GO:1990904">
    <property type="term" value="C:ribonucleoprotein complex"/>
    <property type="evidence" value="ECO:0007669"/>
    <property type="project" value="UniProtKB-KW"/>
</dbReference>
<dbReference type="GO" id="GO:0005840">
    <property type="term" value="C:ribosome"/>
    <property type="evidence" value="ECO:0007669"/>
    <property type="project" value="UniProtKB-KW"/>
</dbReference>
<dbReference type="GO" id="GO:0019843">
    <property type="term" value="F:rRNA binding"/>
    <property type="evidence" value="ECO:0007669"/>
    <property type="project" value="UniProtKB-UniRule"/>
</dbReference>
<dbReference type="GO" id="GO:0003735">
    <property type="term" value="F:structural constituent of ribosome"/>
    <property type="evidence" value="ECO:0007669"/>
    <property type="project" value="InterPro"/>
</dbReference>
<dbReference type="GO" id="GO:0006412">
    <property type="term" value="P:translation"/>
    <property type="evidence" value="ECO:0007669"/>
    <property type="project" value="UniProtKB-UniRule"/>
</dbReference>
<dbReference type="CDD" id="cd06089">
    <property type="entry name" value="KOW_RPL26"/>
    <property type="match status" value="1"/>
</dbReference>
<dbReference type="Gene3D" id="2.30.30.30">
    <property type="match status" value="1"/>
</dbReference>
<dbReference type="HAMAP" id="MF_01326_B">
    <property type="entry name" value="Ribosomal_uL24_B"/>
    <property type="match status" value="1"/>
</dbReference>
<dbReference type="InterPro" id="IPR005824">
    <property type="entry name" value="KOW"/>
</dbReference>
<dbReference type="InterPro" id="IPR014722">
    <property type="entry name" value="Rib_uL2_dom2"/>
</dbReference>
<dbReference type="InterPro" id="IPR003256">
    <property type="entry name" value="Ribosomal_uL24"/>
</dbReference>
<dbReference type="InterPro" id="IPR005825">
    <property type="entry name" value="Ribosomal_uL24_CS"/>
</dbReference>
<dbReference type="InterPro" id="IPR041988">
    <property type="entry name" value="Ribosomal_uL24_KOW"/>
</dbReference>
<dbReference type="InterPro" id="IPR008991">
    <property type="entry name" value="Translation_prot_SH3-like_sf"/>
</dbReference>
<dbReference type="NCBIfam" id="TIGR01079">
    <property type="entry name" value="rplX_bact"/>
    <property type="match status" value="1"/>
</dbReference>
<dbReference type="PANTHER" id="PTHR12903">
    <property type="entry name" value="MITOCHONDRIAL RIBOSOMAL PROTEIN L24"/>
    <property type="match status" value="1"/>
</dbReference>
<dbReference type="Pfam" id="PF00467">
    <property type="entry name" value="KOW"/>
    <property type="match status" value="1"/>
</dbReference>
<dbReference type="Pfam" id="PF17136">
    <property type="entry name" value="ribosomal_L24"/>
    <property type="match status" value="1"/>
</dbReference>
<dbReference type="SMART" id="SM00739">
    <property type="entry name" value="KOW"/>
    <property type="match status" value="1"/>
</dbReference>
<dbReference type="SUPFAM" id="SSF50104">
    <property type="entry name" value="Translation proteins SH3-like domain"/>
    <property type="match status" value="1"/>
</dbReference>
<dbReference type="PROSITE" id="PS01108">
    <property type="entry name" value="RIBOSOMAL_L24"/>
    <property type="match status" value="1"/>
</dbReference>
<protein>
    <recommendedName>
        <fullName evidence="1">Large ribosomal subunit protein uL24</fullName>
    </recommendedName>
    <alternativeName>
        <fullName evidence="2">50S ribosomal protein L24</fullName>
    </alternativeName>
</protein>
<evidence type="ECO:0000255" key="1">
    <source>
        <dbReference type="HAMAP-Rule" id="MF_01326"/>
    </source>
</evidence>
<evidence type="ECO:0000305" key="2"/>
<evidence type="ECO:0007829" key="3">
    <source>
        <dbReference type="PDB" id="8FN2"/>
    </source>
</evidence>
<gene>
    <name evidence="1" type="primary">rplX</name>
    <name type="ordered locus">BB_0489</name>
</gene>
<comment type="function">
    <text evidence="1">One of two assembly initiator proteins, it binds directly to the 5'-end of the 23S rRNA, where it nucleates assembly of the 50S subunit.</text>
</comment>
<comment type="function">
    <text evidence="1">One of the proteins that surrounds the polypeptide exit tunnel on the outside of the subunit.</text>
</comment>
<comment type="subunit">
    <text evidence="1">Part of the 50S ribosomal subunit.</text>
</comment>
<comment type="similarity">
    <text evidence="1">Belongs to the universal ribosomal protein uL24 family.</text>
</comment>
<proteinExistence type="evidence at protein level"/>
<feature type="chain" id="PRO_0000130627" description="Large ribosomal subunit protein uL24">
    <location>
        <begin position="1"/>
        <end position="101"/>
    </location>
</feature>
<feature type="strand" evidence="3">
    <location>
        <begin position="10"/>
        <end position="13"/>
    </location>
</feature>
<feature type="strand" evidence="3">
    <location>
        <begin position="15"/>
        <end position="18"/>
    </location>
</feature>
<feature type="strand" evidence="3">
    <location>
        <begin position="22"/>
        <end position="29"/>
    </location>
</feature>
<feature type="turn" evidence="3">
    <location>
        <begin position="30"/>
        <end position="33"/>
    </location>
</feature>
<feature type="strand" evidence="3">
    <location>
        <begin position="34"/>
        <end position="37"/>
    </location>
</feature>
<feature type="strand" evidence="3">
    <location>
        <begin position="41"/>
        <end position="47"/>
    </location>
</feature>
<feature type="strand" evidence="3">
    <location>
        <begin position="50"/>
        <end position="54"/>
    </location>
</feature>
<feature type="strand" evidence="3">
    <location>
        <begin position="57"/>
        <end position="62"/>
    </location>
</feature>
<feature type="helix" evidence="3">
    <location>
        <begin position="67"/>
        <end position="69"/>
    </location>
</feature>
<feature type="strand" evidence="3">
    <location>
        <begin position="70"/>
        <end position="73"/>
    </location>
</feature>
<feature type="strand" evidence="3">
    <location>
        <begin position="81"/>
        <end position="85"/>
    </location>
</feature>
<feature type="strand" evidence="3">
    <location>
        <begin position="90"/>
        <end position="94"/>
    </location>
</feature>
<feature type="turn" evidence="3">
    <location>
        <begin position="95"/>
        <end position="97"/>
    </location>
</feature>
<organism>
    <name type="scientific">Borreliella burgdorferi (strain ATCC 35210 / DSM 4680 / CIP 102532 / B31)</name>
    <name type="common">Borrelia burgdorferi</name>
    <dbReference type="NCBI Taxonomy" id="224326"/>
    <lineage>
        <taxon>Bacteria</taxon>
        <taxon>Pseudomonadati</taxon>
        <taxon>Spirochaetota</taxon>
        <taxon>Spirochaetia</taxon>
        <taxon>Spirochaetales</taxon>
        <taxon>Borreliaceae</taxon>
        <taxon>Borreliella</taxon>
    </lineage>
</organism>
<name>RL24_BORBU</name>
<sequence length="101" mass="11441">MKTKLKIGDSVKILSGKDRGRIGKIASINRKKNKVIVESCNMVKKVIKARTPQEKGRIIDKEAAIDISNVMIFVKGTSSRLGIRFENNEKIRYLKKNGQRI</sequence>
<keyword id="KW-0002">3D-structure</keyword>
<keyword id="KW-1185">Reference proteome</keyword>
<keyword id="KW-0687">Ribonucleoprotein</keyword>
<keyword id="KW-0689">Ribosomal protein</keyword>
<keyword id="KW-0694">RNA-binding</keyword>
<keyword id="KW-0699">rRNA-binding</keyword>
<accession>O51442</accession>
<reference key="1">
    <citation type="journal article" date="1997" name="Nature">
        <title>Genomic sequence of a Lyme disease spirochaete, Borrelia burgdorferi.</title>
        <authorList>
            <person name="Fraser C.M."/>
            <person name="Casjens S."/>
            <person name="Huang W.M."/>
            <person name="Sutton G.G."/>
            <person name="Clayton R.A."/>
            <person name="Lathigra R."/>
            <person name="White O."/>
            <person name="Ketchum K.A."/>
            <person name="Dodson R.J."/>
            <person name="Hickey E.K."/>
            <person name="Gwinn M.L."/>
            <person name="Dougherty B.A."/>
            <person name="Tomb J.-F."/>
            <person name="Fleischmann R.D."/>
            <person name="Richardson D.L."/>
            <person name="Peterson J.D."/>
            <person name="Kerlavage A.R."/>
            <person name="Quackenbush J."/>
            <person name="Salzberg S.L."/>
            <person name="Hanson M."/>
            <person name="van Vugt R."/>
            <person name="Palmer N."/>
            <person name="Adams M.D."/>
            <person name="Gocayne J.D."/>
            <person name="Weidman J.F."/>
            <person name="Utterback T.R."/>
            <person name="Watthey L."/>
            <person name="McDonald L.A."/>
            <person name="Artiach P."/>
            <person name="Bowman C."/>
            <person name="Garland S.A."/>
            <person name="Fujii C."/>
            <person name="Cotton M.D."/>
            <person name="Horst K."/>
            <person name="Roberts K.M."/>
            <person name="Hatch B."/>
            <person name="Smith H.O."/>
            <person name="Venter J.C."/>
        </authorList>
    </citation>
    <scope>NUCLEOTIDE SEQUENCE [LARGE SCALE GENOMIC DNA]</scope>
    <source>
        <strain>ATCC 35210 / DSM 4680 / CIP 102532 / B31</strain>
    </source>
</reference>